<accession>Q2J0A5</accession>
<name>MASZ_RHOP2</name>
<sequence>MNRIDAHGLKIAPVLFDFIAKEAAPKTGVAPDAFWAGLAAIVRDLTPKTVALLQHRDGLQAKIDAWHLANKGKKQDMAAYTAFLKEIGYLLPEPPTVAVETANVDDEIGKLCGPQLVVPLSNARYALNAANARWGSLYDAFYGTDAIPQEASQAKGYDKARGDKVIAKAKAFLDQAAPLVAGSHSDVTAYSVIAGQLSAKLKSGNATGLKTPRQFAGYLGDAASPSAVLLVNNGLHIEIKIDRANTIGKDDAAGVADLVIESAVSTILDMEDSVAAVDAEDKVLIYRNTLGLMDGTLSADFDKGGKTVTRALNGDRTYTGPDGKDVTLHGRSLLLMRNVGHHMWTDAVLDSNGDEIPEGFLDAAVSGLLAIHDLKALGKTRNSRTGSVYIVKPKMHGPDEVALTCELFGRVEQMLGLKENTLKVGIMDEERRTTVNLKACIQNASKRIVFINTGFLDRTGDEIHTSMEAGPMIRKNEMKAQPWIKAYEDWNVDTGLIDGLPGHAQIGKGMWAAPDKMADMLTQKIGHPQAGATTAWVPSPTAATLHALHYHQVDVLARQQELKTGGPRAKLEDILTIPVSQSNWAPDDVRQEIDNNCQGILGYVVRWIDQGVGCSKVPDIHDVGLMEDRATLRISSQHLANWLHHGVVTKEQVLESLKRMAAVVDKQNAGDPLYRPMAPDFDGVAFEAACDLIFKGREQPNGYTEFILHIRRREAKAAHLQDLT</sequence>
<organism>
    <name type="scientific">Rhodopseudomonas palustris (strain HaA2)</name>
    <dbReference type="NCBI Taxonomy" id="316058"/>
    <lineage>
        <taxon>Bacteria</taxon>
        <taxon>Pseudomonadati</taxon>
        <taxon>Pseudomonadota</taxon>
        <taxon>Alphaproteobacteria</taxon>
        <taxon>Hyphomicrobiales</taxon>
        <taxon>Nitrobacteraceae</taxon>
        <taxon>Rhodopseudomonas</taxon>
    </lineage>
</organism>
<reference key="1">
    <citation type="submission" date="2006-01" db="EMBL/GenBank/DDBJ databases">
        <title>Complete sequence of Rhodopseudomonas palustris HaA2.</title>
        <authorList>
            <consortium name="US DOE Joint Genome Institute"/>
            <person name="Copeland A."/>
            <person name="Lucas S."/>
            <person name="Lapidus A."/>
            <person name="Barry K."/>
            <person name="Detter J.C."/>
            <person name="Glavina T."/>
            <person name="Hammon N."/>
            <person name="Israni S."/>
            <person name="Pitluck S."/>
            <person name="Chain P."/>
            <person name="Malfatti S."/>
            <person name="Shin M."/>
            <person name="Vergez L."/>
            <person name="Schmutz J."/>
            <person name="Larimer F."/>
            <person name="Land M."/>
            <person name="Hauser L."/>
            <person name="Pelletier D.A."/>
            <person name="Kyrpides N."/>
            <person name="Anderson I."/>
            <person name="Oda Y."/>
            <person name="Harwood C.S."/>
            <person name="Richardson P."/>
        </authorList>
    </citation>
    <scope>NUCLEOTIDE SEQUENCE [LARGE SCALE GENOMIC DNA]</scope>
    <source>
        <strain>HaA2</strain>
    </source>
</reference>
<protein>
    <recommendedName>
        <fullName evidence="1">Malate synthase G</fullName>
        <ecNumber evidence="1">2.3.3.9</ecNumber>
    </recommendedName>
</protein>
<gene>
    <name evidence="1" type="primary">glcB</name>
    <name type="ordered locus">RPB_1395</name>
</gene>
<proteinExistence type="inferred from homology"/>
<keyword id="KW-0963">Cytoplasm</keyword>
<keyword id="KW-0329">Glyoxylate bypass</keyword>
<keyword id="KW-0460">Magnesium</keyword>
<keyword id="KW-0479">Metal-binding</keyword>
<keyword id="KW-0558">Oxidation</keyword>
<keyword id="KW-1185">Reference proteome</keyword>
<keyword id="KW-0808">Transferase</keyword>
<keyword id="KW-0816">Tricarboxylic acid cycle</keyword>
<feature type="chain" id="PRO_1000056923" description="Malate synthase G">
    <location>
        <begin position="1"/>
        <end position="724"/>
    </location>
</feature>
<feature type="active site" description="Proton acceptor" evidence="1">
    <location>
        <position position="337"/>
    </location>
</feature>
<feature type="active site" description="Proton donor" evidence="1">
    <location>
        <position position="628"/>
    </location>
</feature>
<feature type="binding site" evidence="1">
    <location>
        <position position="117"/>
    </location>
    <ligand>
        <name>acetyl-CoA</name>
        <dbReference type="ChEBI" id="CHEBI:57288"/>
    </ligand>
</feature>
<feature type="binding site" evidence="1">
    <location>
        <begin position="124"/>
        <end position="125"/>
    </location>
    <ligand>
        <name>acetyl-CoA</name>
        <dbReference type="ChEBI" id="CHEBI:57288"/>
    </ligand>
</feature>
<feature type="binding site" evidence="1">
    <location>
        <position position="273"/>
    </location>
    <ligand>
        <name>acetyl-CoA</name>
        <dbReference type="ChEBI" id="CHEBI:57288"/>
    </ligand>
</feature>
<feature type="binding site" evidence="1">
    <location>
        <position position="310"/>
    </location>
    <ligand>
        <name>acetyl-CoA</name>
        <dbReference type="ChEBI" id="CHEBI:57288"/>
    </ligand>
</feature>
<feature type="binding site" evidence="1">
    <location>
        <position position="337"/>
    </location>
    <ligand>
        <name>glyoxylate</name>
        <dbReference type="ChEBI" id="CHEBI:36655"/>
    </ligand>
</feature>
<feature type="binding site" evidence="1">
    <location>
        <position position="429"/>
    </location>
    <ligand>
        <name>glyoxylate</name>
        <dbReference type="ChEBI" id="CHEBI:36655"/>
    </ligand>
</feature>
<feature type="binding site" evidence="1">
    <location>
        <position position="429"/>
    </location>
    <ligand>
        <name>Mg(2+)</name>
        <dbReference type="ChEBI" id="CHEBI:18420"/>
    </ligand>
</feature>
<feature type="binding site" evidence="1">
    <location>
        <begin position="454"/>
        <end position="457"/>
    </location>
    <ligand>
        <name>glyoxylate</name>
        <dbReference type="ChEBI" id="CHEBI:36655"/>
    </ligand>
</feature>
<feature type="binding site" evidence="1">
    <location>
        <position position="457"/>
    </location>
    <ligand>
        <name>Mg(2+)</name>
        <dbReference type="ChEBI" id="CHEBI:18420"/>
    </ligand>
</feature>
<feature type="binding site" evidence="1">
    <location>
        <position position="538"/>
    </location>
    <ligand>
        <name>acetyl-CoA</name>
        <dbReference type="ChEBI" id="CHEBI:57288"/>
    </ligand>
</feature>
<feature type="modified residue" description="Cysteine sulfenic acid (-SOH)" evidence="1">
    <location>
        <position position="614"/>
    </location>
</feature>
<dbReference type="EC" id="2.3.3.9" evidence="1"/>
<dbReference type="EMBL" id="CP000250">
    <property type="protein sequence ID" value="ABD06105.1"/>
    <property type="molecule type" value="Genomic_DNA"/>
</dbReference>
<dbReference type="RefSeq" id="WP_011440293.1">
    <property type="nucleotide sequence ID" value="NC_007778.1"/>
</dbReference>
<dbReference type="SMR" id="Q2J0A5"/>
<dbReference type="STRING" id="316058.RPB_1395"/>
<dbReference type="KEGG" id="rpb:RPB_1395"/>
<dbReference type="eggNOG" id="COG2225">
    <property type="taxonomic scope" value="Bacteria"/>
</dbReference>
<dbReference type="HOGENOM" id="CLU_028446_1_0_5"/>
<dbReference type="OrthoDB" id="9762054at2"/>
<dbReference type="UniPathway" id="UPA00703">
    <property type="reaction ID" value="UER00720"/>
</dbReference>
<dbReference type="Proteomes" id="UP000008809">
    <property type="component" value="Chromosome"/>
</dbReference>
<dbReference type="GO" id="GO:0005829">
    <property type="term" value="C:cytosol"/>
    <property type="evidence" value="ECO:0007669"/>
    <property type="project" value="TreeGrafter"/>
</dbReference>
<dbReference type="GO" id="GO:0000287">
    <property type="term" value="F:magnesium ion binding"/>
    <property type="evidence" value="ECO:0007669"/>
    <property type="project" value="TreeGrafter"/>
</dbReference>
<dbReference type="GO" id="GO:0004474">
    <property type="term" value="F:malate synthase activity"/>
    <property type="evidence" value="ECO:0007669"/>
    <property type="project" value="UniProtKB-UniRule"/>
</dbReference>
<dbReference type="GO" id="GO:0009436">
    <property type="term" value="P:glyoxylate catabolic process"/>
    <property type="evidence" value="ECO:0007669"/>
    <property type="project" value="TreeGrafter"/>
</dbReference>
<dbReference type="GO" id="GO:0006097">
    <property type="term" value="P:glyoxylate cycle"/>
    <property type="evidence" value="ECO:0007669"/>
    <property type="project" value="UniProtKB-UniRule"/>
</dbReference>
<dbReference type="GO" id="GO:0006099">
    <property type="term" value="P:tricarboxylic acid cycle"/>
    <property type="evidence" value="ECO:0007669"/>
    <property type="project" value="UniProtKB-KW"/>
</dbReference>
<dbReference type="FunFam" id="3.20.20.360:FF:000002">
    <property type="entry name" value="Malate synthase G"/>
    <property type="match status" value="1"/>
</dbReference>
<dbReference type="Gene3D" id="3.20.20.360">
    <property type="entry name" value="Malate synthase, domain 3"/>
    <property type="match status" value="2"/>
</dbReference>
<dbReference type="Gene3D" id="1.20.1220.12">
    <property type="entry name" value="Malate synthase, domain III"/>
    <property type="match status" value="1"/>
</dbReference>
<dbReference type="HAMAP" id="MF_00641">
    <property type="entry name" value="Malate_synth_G"/>
    <property type="match status" value="1"/>
</dbReference>
<dbReference type="InterPro" id="IPR044856">
    <property type="entry name" value="Malate_synth_C_sf"/>
</dbReference>
<dbReference type="InterPro" id="IPR011076">
    <property type="entry name" value="Malate_synth_sf"/>
</dbReference>
<dbReference type="InterPro" id="IPR001465">
    <property type="entry name" value="Malate_synthase_TIM"/>
</dbReference>
<dbReference type="InterPro" id="IPR006253">
    <property type="entry name" value="Malate_synthG"/>
</dbReference>
<dbReference type="InterPro" id="IPR048355">
    <property type="entry name" value="MS_C"/>
</dbReference>
<dbReference type="InterPro" id="IPR048356">
    <property type="entry name" value="MS_N"/>
</dbReference>
<dbReference type="InterPro" id="IPR046363">
    <property type="entry name" value="MS_N_TIM-barrel_dom"/>
</dbReference>
<dbReference type="InterPro" id="IPR048357">
    <property type="entry name" value="MSG_insertion"/>
</dbReference>
<dbReference type="NCBIfam" id="TIGR01345">
    <property type="entry name" value="malate_syn_G"/>
    <property type="match status" value="1"/>
</dbReference>
<dbReference type="NCBIfam" id="NF002825">
    <property type="entry name" value="PRK02999.1"/>
    <property type="match status" value="1"/>
</dbReference>
<dbReference type="PANTHER" id="PTHR42739">
    <property type="entry name" value="MALATE SYNTHASE G"/>
    <property type="match status" value="1"/>
</dbReference>
<dbReference type="PANTHER" id="PTHR42739:SF1">
    <property type="entry name" value="MALATE SYNTHASE G"/>
    <property type="match status" value="1"/>
</dbReference>
<dbReference type="Pfam" id="PF20659">
    <property type="entry name" value="MS_C"/>
    <property type="match status" value="1"/>
</dbReference>
<dbReference type="Pfam" id="PF20656">
    <property type="entry name" value="MS_N"/>
    <property type="match status" value="1"/>
</dbReference>
<dbReference type="Pfam" id="PF01274">
    <property type="entry name" value="MS_TIM-barrel"/>
    <property type="match status" value="1"/>
</dbReference>
<dbReference type="Pfam" id="PF20658">
    <property type="entry name" value="MSG_insertion"/>
    <property type="match status" value="1"/>
</dbReference>
<dbReference type="SUPFAM" id="SSF51645">
    <property type="entry name" value="Malate synthase G"/>
    <property type="match status" value="1"/>
</dbReference>
<comment type="function">
    <text evidence="1">Involved in the glycolate utilization. Catalyzes the condensation and subsequent hydrolysis of acetyl-coenzyme A (acetyl-CoA) and glyoxylate to form malate and CoA.</text>
</comment>
<comment type="catalytic activity">
    <reaction evidence="1">
        <text>glyoxylate + acetyl-CoA + H2O = (S)-malate + CoA + H(+)</text>
        <dbReference type="Rhea" id="RHEA:18181"/>
        <dbReference type="ChEBI" id="CHEBI:15377"/>
        <dbReference type="ChEBI" id="CHEBI:15378"/>
        <dbReference type="ChEBI" id="CHEBI:15589"/>
        <dbReference type="ChEBI" id="CHEBI:36655"/>
        <dbReference type="ChEBI" id="CHEBI:57287"/>
        <dbReference type="ChEBI" id="CHEBI:57288"/>
        <dbReference type="EC" id="2.3.3.9"/>
    </reaction>
</comment>
<comment type="cofactor">
    <cofactor evidence="1">
        <name>Mg(2+)</name>
        <dbReference type="ChEBI" id="CHEBI:18420"/>
    </cofactor>
</comment>
<comment type="pathway">
    <text evidence="1">Carbohydrate metabolism; glyoxylate cycle; (S)-malate from isocitrate: step 2/2.</text>
</comment>
<comment type="subunit">
    <text evidence="1">Monomer.</text>
</comment>
<comment type="subcellular location">
    <subcellularLocation>
        <location evidence="1">Cytoplasm</location>
    </subcellularLocation>
</comment>
<comment type="similarity">
    <text evidence="1">Belongs to the malate synthase family. GlcB subfamily.</text>
</comment>
<evidence type="ECO:0000255" key="1">
    <source>
        <dbReference type="HAMAP-Rule" id="MF_00641"/>
    </source>
</evidence>